<name>RL3_SHIF8</name>
<protein>
    <recommendedName>
        <fullName evidence="1">Large ribosomal subunit protein uL3</fullName>
    </recommendedName>
    <alternativeName>
        <fullName evidence="2">50S ribosomal protein L3</fullName>
    </alternativeName>
</protein>
<sequence length="209" mass="22244">MIGLVGKKVGMTRIFTEDGVSIPVTVIEVEANRVTQVKDLANDGYRAIQVTTGAKKANRVTKPEAGHFAKAGVEAGRGLWEFRLAEGEEFTVGQSISVELFADVKKVDVTGTSKGKGFAGTVKRWNFRTQDATHGNSLSHRVPGSIGQNQTPGKVFKGKKMAGQMGNERVTVQSLDVVRVDAERNLLLVKGAVPGATGSDLIVKPAVKA</sequence>
<accession>Q0SZY3</accession>
<organism>
    <name type="scientific">Shigella flexneri serotype 5b (strain 8401)</name>
    <dbReference type="NCBI Taxonomy" id="373384"/>
    <lineage>
        <taxon>Bacteria</taxon>
        <taxon>Pseudomonadati</taxon>
        <taxon>Pseudomonadota</taxon>
        <taxon>Gammaproteobacteria</taxon>
        <taxon>Enterobacterales</taxon>
        <taxon>Enterobacteriaceae</taxon>
        <taxon>Shigella</taxon>
    </lineage>
</organism>
<comment type="function">
    <text evidence="1">One of the primary rRNA binding proteins, it binds directly near the 3'-end of the 23S rRNA, where it nucleates assembly of the 50S subunit.</text>
</comment>
<comment type="subunit">
    <text evidence="1">Part of the 50S ribosomal subunit. Forms a cluster with proteins L14 and L19.</text>
</comment>
<comment type="PTM">
    <text evidence="1">Methylated by PrmB.</text>
</comment>
<comment type="similarity">
    <text evidence="1">Belongs to the universal ribosomal protein uL3 family.</text>
</comment>
<proteinExistence type="inferred from homology"/>
<keyword id="KW-0488">Methylation</keyword>
<keyword id="KW-0687">Ribonucleoprotein</keyword>
<keyword id="KW-0689">Ribosomal protein</keyword>
<keyword id="KW-0694">RNA-binding</keyword>
<keyword id="KW-0699">rRNA-binding</keyword>
<evidence type="ECO:0000255" key="1">
    <source>
        <dbReference type="HAMAP-Rule" id="MF_01325"/>
    </source>
</evidence>
<evidence type="ECO:0000305" key="2"/>
<gene>
    <name evidence="1" type="primary">rplC</name>
    <name type="ordered locus">SFV_3339</name>
</gene>
<reference key="1">
    <citation type="journal article" date="2006" name="BMC Genomics">
        <title>Complete genome sequence of Shigella flexneri 5b and comparison with Shigella flexneri 2a.</title>
        <authorList>
            <person name="Nie H."/>
            <person name="Yang F."/>
            <person name="Zhang X."/>
            <person name="Yang J."/>
            <person name="Chen L."/>
            <person name="Wang J."/>
            <person name="Xiong Z."/>
            <person name="Peng J."/>
            <person name="Sun L."/>
            <person name="Dong J."/>
            <person name="Xue Y."/>
            <person name="Xu X."/>
            <person name="Chen S."/>
            <person name="Yao Z."/>
            <person name="Shen Y."/>
            <person name="Jin Q."/>
        </authorList>
    </citation>
    <scope>NUCLEOTIDE SEQUENCE [LARGE SCALE GENOMIC DNA]</scope>
    <source>
        <strain>8401</strain>
    </source>
</reference>
<feature type="chain" id="PRO_1000052143" description="Large ribosomal subunit protein uL3">
    <location>
        <begin position="1"/>
        <end position="209"/>
    </location>
</feature>
<feature type="modified residue" description="N5-methylglutamine" evidence="1">
    <location>
        <position position="150"/>
    </location>
</feature>
<dbReference type="EMBL" id="CP000266">
    <property type="protein sequence ID" value="ABF05382.1"/>
    <property type="molecule type" value="Genomic_DNA"/>
</dbReference>
<dbReference type="RefSeq" id="WP_000579833.1">
    <property type="nucleotide sequence ID" value="NC_008258.1"/>
</dbReference>
<dbReference type="SMR" id="Q0SZY3"/>
<dbReference type="GeneID" id="86948184"/>
<dbReference type="KEGG" id="sfv:SFV_3339"/>
<dbReference type="HOGENOM" id="CLU_044142_4_1_6"/>
<dbReference type="Proteomes" id="UP000000659">
    <property type="component" value="Chromosome"/>
</dbReference>
<dbReference type="GO" id="GO:0022625">
    <property type="term" value="C:cytosolic large ribosomal subunit"/>
    <property type="evidence" value="ECO:0007669"/>
    <property type="project" value="TreeGrafter"/>
</dbReference>
<dbReference type="GO" id="GO:0019843">
    <property type="term" value="F:rRNA binding"/>
    <property type="evidence" value="ECO:0007669"/>
    <property type="project" value="UniProtKB-UniRule"/>
</dbReference>
<dbReference type="GO" id="GO:0003735">
    <property type="term" value="F:structural constituent of ribosome"/>
    <property type="evidence" value="ECO:0007669"/>
    <property type="project" value="InterPro"/>
</dbReference>
<dbReference type="GO" id="GO:0006412">
    <property type="term" value="P:translation"/>
    <property type="evidence" value="ECO:0007669"/>
    <property type="project" value="UniProtKB-UniRule"/>
</dbReference>
<dbReference type="FunFam" id="2.40.30.10:FF:000004">
    <property type="entry name" value="50S ribosomal protein L3"/>
    <property type="match status" value="1"/>
</dbReference>
<dbReference type="FunFam" id="3.30.160.810:FF:000001">
    <property type="entry name" value="50S ribosomal protein L3"/>
    <property type="match status" value="1"/>
</dbReference>
<dbReference type="Gene3D" id="3.30.160.810">
    <property type="match status" value="1"/>
</dbReference>
<dbReference type="Gene3D" id="2.40.30.10">
    <property type="entry name" value="Translation factors"/>
    <property type="match status" value="1"/>
</dbReference>
<dbReference type="HAMAP" id="MF_01325_B">
    <property type="entry name" value="Ribosomal_uL3_B"/>
    <property type="match status" value="1"/>
</dbReference>
<dbReference type="InterPro" id="IPR000597">
    <property type="entry name" value="Ribosomal_uL3"/>
</dbReference>
<dbReference type="InterPro" id="IPR019927">
    <property type="entry name" value="Ribosomal_uL3_bac/org-type"/>
</dbReference>
<dbReference type="InterPro" id="IPR019926">
    <property type="entry name" value="Ribosomal_uL3_CS"/>
</dbReference>
<dbReference type="InterPro" id="IPR009000">
    <property type="entry name" value="Transl_B-barrel_sf"/>
</dbReference>
<dbReference type="NCBIfam" id="TIGR03625">
    <property type="entry name" value="L3_bact"/>
    <property type="match status" value="1"/>
</dbReference>
<dbReference type="PANTHER" id="PTHR11229">
    <property type="entry name" value="50S RIBOSOMAL PROTEIN L3"/>
    <property type="match status" value="1"/>
</dbReference>
<dbReference type="PANTHER" id="PTHR11229:SF16">
    <property type="entry name" value="LARGE RIBOSOMAL SUBUNIT PROTEIN UL3C"/>
    <property type="match status" value="1"/>
</dbReference>
<dbReference type="Pfam" id="PF00297">
    <property type="entry name" value="Ribosomal_L3"/>
    <property type="match status" value="1"/>
</dbReference>
<dbReference type="SUPFAM" id="SSF50447">
    <property type="entry name" value="Translation proteins"/>
    <property type="match status" value="1"/>
</dbReference>
<dbReference type="PROSITE" id="PS00474">
    <property type="entry name" value="RIBOSOMAL_L3"/>
    <property type="match status" value="1"/>
</dbReference>